<reference key="1">
    <citation type="journal article" date="2002" name="Science">
        <title>50 million years of genomic stasis in endosymbiotic bacteria.</title>
        <authorList>
            <person name="Tamas I."/>
            <person name="Klasson L."/>
            <person name="Canbaeck B."/>
            <person name="Naeslund A.K."/>
            <person name="Eriksson A.-S."/>
            <person name="Wernegreen J.J."/>
            <person name="Sandstroem J.P."/>
            <person name="Moran N.A."/>
            <person name="Andersson S.G.E."/>
        </authorList>
    </citation>
    <scope>NUCLEOTIDE SEQUENCE [LARGE SCALE GENOMIC DNA]</scope>
    <source>
        <strain>Sg</strain>
    </source>
</reference>
<dbReference type="EC" id="4.6.1.12" evidence="1"/>
<dbReference type="EMBL" id="AE013218">
    <property type="protein sequence ID" value="AAM67954.1"/>
    <property type="molecule type" value="Genomic_DNA"/>
</dbReference>
<dbReference type="RefSeq" id="WP_011053921.1">
    <property type="nucleotide sequence ID" value="NC_004061.1"/>
</dbReference>
<dbReference type="SMR" id="Q8K9D7"/>
<dbReference type="STRING" id="198804.BUsg_404"/>
<dbReference type="GeneID" id="93003877"/>
<dbReference type="KEGG" id="bas:BUsg_404"/>
<dbReference type="eggNOG" id="COG0245">
    <property type="taxonomic scope" value="Bacteria"/>
</dbReference>
<dbReference type="HOGENOM" id="CLU_084630_2_0_6"/>
<dbReference type="UniPathway" id="UPA00056">
    <property type="reaction ID" value="UER00095"/>
</dbReference>
<dbReference type="Proteomes" id="UP000000416">
    <property type="component" value="Chromosome"/>
</dbReference>
<dbReference type="GO" id="GO:0008685">
    <property type="term" value="F:2-C-methyl-D-erythritol 2,4-cyclodiphosphate synthase activity"/>
    <property type="evidence" value="ECO:0007669"/>
    <property type="project" value="UniProtKB-UniRule"/>
</dbReference>
<dbReference type="GO" id="GO:0046872">
    <property type="term" value="F:metal ion binding"/>
    <property type="evidence" value="ECO:0007669"/>
    <property type="project" value="UniProtKB-KW"/>
</dbReference>
<dbReference type="GO" id="GO:0019288">
    <property type="term" value="P:isopentenyl diphosphate biosynthetic process, methylerythritol 4-phosphate pathway"/>
    <property type="evidence" value="ECO:0007669"/>
    <property type="project" value="UniProtKB-UniRule"/>
</dbReference>
<dbReference type="GO" id="GO:0016114">
    <property type="term" value="P:terpenoid biosynthetic process"/>
    <property type="evidence" value="ECO:0007669"/>
    <property type="project" value="InterPro"/>
</dbReference>
<dbReference type="CDD" id="cd00554">
    <property type="entry name" value="MECDP_synthase"/>
    <property type="match status" value="1"/>
</dbReference>
<dbReference type="Gene3D" id="3.30.1330.50">
    <property type="entry name" value="2-C-methyl-D-erythritol 2,4-cyclodiphosphate synthase"/>
    <property type="match status" value="1"/>
</dbReference>
<dbReference type="HAMAP" id="MF_00107">
    <property type="entry name" value="IspF"/>
    <property type="match status" value="1"/>
</dbReference>
<dbReference type="InterPro" id="IPR003526">
    <property type="entry name" value="MECDP_synthase"/>
</dbReference>
<dbReference type="InterPro" id="IPR020555">
    <property type="entry name" value="MECDP_synthase_CS"/>
</dbReference>
<dbReference type="InterPro" id="IPR036571">
    <property type="entry name" value="MECDP_synthase_sf"/>
</dbReference>
<dbReference type="NCBIfam" id="TIGR00151">
    <property type="entry name" value="ispF"/>
    <property type="match status" value="1"/>
</dbReference>
<dbReference type="PANTHER" id="PTHR43181">
    <property type="entry name" value="2-C-METHYL-D-ERYTHRITOL 2,4-CYCLODIPHOSPHATE SYNTHASE, CHLOROPLASTIC"/>
    <property type="match status" value="1"/>
</dbReference>
<dbReference type="PANTHER" id="PTHR43181:SF1">
    <property type="entry name" value="2-C-METHYL-D-ERYTHRITOL 2,4-CYCLODIPHOSPHATE SYNTHASE, CHLOROPLASTIC"/>
    <property type="match status" value="1"/>
</dbReference>
<dbReference type="Pfam" id="PF02542">
    <property type="entry name" value="YgbB"/>
    <property type="match status" value="1"/>
</dbReference>
<dbReference type="SUPFAM" id="SSF69765">
    <property type="entry name" value="IpsF-like"/>
    <property type="match status" value="1"/>
</dbReference>
<dbReference type="PROSITE" id="PS01350">
    <property type="entry name" value="ISPF"/>
    <property type="match status" value="1"/>
</dbReference>
<keyword id="KW-0414">Isoprene biosynthesis</keyword>
<keyword id="KW-0456">Lyase</keyword>
<keyword id="KW-0479">Metal-binding</keyword>
<gene>
    <name evidence="1" type="primary">ispF</name>
    <name type="ordered locus">BUsg_404</name>
</gene>
<feature type="chain" id="PRO_0000189448" description="2-C-methyl-D-erythritol 2,4-cyclodiphosphate synthase">
    <location>
        <begin position="1"/>
        <end position="167"/>
    </location>
</feature>
<feature type="binding site" evidence="1">
    <location>
        <begin position="8"/>
        <end position="10"/>
    </location>
    <ligand>
        <name>4-CDP-2-C-methyl-D-erythritol 2-phosphate</name>
        <dbReference type="ChEBI" id="CHEBI:57919"/>
    </ligand>
</feature>
<feature type="binding site" evidence="1">
    <location>
        <position position="8"/>
    </location>
    <ligand>
        <name>a divalent metal cation</name>
        <dbReference type="ChEBI" id="CHEBI:60240"/>
    </ligand>
</feature>
<feature type="binding site" evidence="1">
    <location>
        <position position="10"/>
    </location>
    <ligand>
        <name>a divalent metal cation</name>
        <dbReference type="ChEBI" id="CHEBI:60240"/>
    </ligand>
</feature>
<feature type="binding site" evidence="1">
    <location>
        <begin position="34"/>
        <end position="35"/>
    </location>
    <ligand>
        <name>4-CDP-2-C-methyl-D-erythritol 2-phosphate</name>
        <dbReference type="ChEBI" id="CHEBI:57919"/>
    </ligand>
</feature>
<feature type="binding site" evidence="1">
    <location>
        <position position="42"/>
    </location>
    <ligand>
        <name>a divalent metal cation</name>
        <dbReference type="ChEBI" id="CHEBI:60240"/>
    </ligand>
</feature>
<feature type="binding site" evidence="1">
    <location>
        <begin position="56"/>
        <end position="58"/>
    </location>
    <ligand>
        <name>4-CDP-2-C-methyl-D-erythritol 2-phosphate</name>
        <dbReference type="ChEBI" id="CHEBI:57919"/>
    </ligand>
</feature>
<feature type="binding site" evidence="1">
    <location>
        <position position="142"/>
    </location>
    <ligand>
        <name>4-CDP-2-C-methyl-D-erythritol 2-phosphate</name>
        <dbReference type="ChEBI" id="CHEBI:57919"/>
    </ligand>
</feature>
<feature type="site" description="Transition state stabilizer" evidence="1">
    <location>
        <position position="34"/>
    </location>
</feature>
<feature type="site" description="Transition state stabilizer" evidence="1">
    <location>
        <position position="133"/>
    </location>
</feature>
<comment type="function">
    <text evidence="1">Involved in the biosynthesis of isopentenyl diphosphate (IPP) and dimethylallyl diphosphate (DMAPP), two major building blocks of isoprenoid compounds. Catalyzes the conversion of 4-diphosphocytidyl-2-C-methyl-D-erythritol 2-phosphate (CDP-ME2P) to 2-C-methyl-D-erythritol 2,4-cyclodiphosphate (ME-CPP) with a corresponding release of cytidine 5-monophosphate (CMP).</text>
</comment>
<comment type="catalytic activity">
    <reaction evidence="1">
        <text>4-CDP-2-C-methyl-D-erythritol 2-phosphate = 2-C-methyl-D-erythritol 2,4-cyclic diphosphate + CMP</text>
        <dbReference type="Rhea" id="RHEA:23864"/>
        <dbReference type="ChEBI" id="CHEBI:57919"/>
        <dbReference type="ChEBI" id="CHEBI:58483"/>
        <dbReference type="ChEBI" id="CHEBI:60377"/>
        <dbReference type="EC" id="4.6.1.12"/>
    </reaction>
</comment>
<comment type="cofactor">
    <cofactor evidence="1">
        <name>a divalent metal cation</name>
        <dbReference type="ChEBI" id="CHEBI:60240"/>
    </cofactor>
    <text evidence="1">Binds 1 divalent metal cation per subunit.</text>
</comment>
<comment type="pathway">
    <text evidence="1">Isoprenoid biosynthesis; isopentenyl diphosphate biosynthesis via DXP pathway; isopentenyl diphosphate from 1-deoxy-D-xylulose 5-phosphate: step 4/6.</text>
</comment>
<comment type="subunit">
    <text evidence="1">Homotrimer.</text>
</comment>
<comment type="similarity">
    <text evidence="1">Belongs to the IspF family.</text>
</comment>
<organism>
    <name type="scientific">Buchnera aphidicola subsp. Schizaphis graminum (strain Sg)</name>
    <dbReference type="NCBI Taxonomy" id="198804"/>
    <lineage>
        <taxon>Bacteria</taxon>
        <taxon>Pseudomonadati</taxon>
        <taxon>Pseudomonadota</taxon>
        <taxon>Gammaproteobacteria</taxon>
        <taxon>Enterobacterales</taxon>
        <taxon>Erwiniaceae</taxon>
        <taxon>Buchnera</taxon>
    </lineage>
</organism>
<protein>
    <recommendedName>
        <fullName evidence="1">2-C-methyl-D-erythritol 2,4-cyclodiphosphate synthase</fullName>
        <shortName evidence="1">MECDP-synthase</shortName>
        <shortName evidence="1">MECPP-synthase</shortName>
        <shortName evidence="1">MECPS</shortName>
        <ecNumber evidence="1">4.6.1.12</ecNumber>
    </recommendedName>
</protein>
<accession>Q8K9D7</accession>
<name>ISPF_BUCAP</name>
<evidence type="ECO:0000255" key="1">
    <source>
        <dbReference type="HAMAP-Rule" id="MF_00107"/>
    </source>
</evidence>
<sequence length="167" mass="18707">MRIGYGFDIHAFGSIKPLIIGGVQIPYNKGLIAHSNGDLLIHSLIDALLGATAMGDIGTFFPSEDKKYKNINSRILLKYIWKRIYLKNYRISNIDITIITETPKILSYIFLMRSNIASDLNIKIEKISVKSTSSKMIGCIGRKEGIACQSLVMLVKSKNTDRKNNII</sequence>
<proteinExistence type="inferred from homology"/>